<accession>Q95X94</accession>
<gene>
    <name evidence="4" type="primary">hyls-1</name>
    <name evidence="4" type="ORF">C05C8.9</name>
</gene>
<proteinExistence type="evidence at protein level"/>
<evidence type="ECO:0000256" key="1">
    <source>
        <dbReference type="SAM" id="MobiDB-lite"/>
    </source>
</evidence>
<evidence type="ECO:0000269" key="2">
    <source>
    </source>
</evidence>
<evidence type="ECO:0000305" key="3"/>
<evidence type="ECO:0000312" key="4">
    <source>
        <dbReference type="WormBase" id="C05C8.9a"/>
    </source>
</evidence>
<organism>
    <name type="scientific">Caenorhabditis elegans</name>
    <dbReference type="NCBI Taxonomy" id="6239"/>
    <lineage>
        <taxon>Eukaryota</taxon>
        <taxon>Metazoa</taxon>
        <taxon>Ecdysozoa</taxon>
        <taxon>Nematoda</taxon>
        <taxon>Chromadorea</taxon>
        <taxon>Rhabditida</taxon>
        <taxon>Rhabditina</taxon>
        <taxon>Rhabditomorpha</taxon>
        <taxon>Rhabditoidea</taxon>
        <taxon>Rhabditidae</taxon>
        <taxon>Peloderinae</taxon>
        <taxon>Caenorhabditis</taxon>
    </lineage>
</organism>
<feature type="chain" id="PRO_0000441756" description="Centriolar and ciliogenesis-associated protein hyls-1">
    <location>
        <begin position="1"/>
        <end position="274"/>
    </location>
</feature>
<feature type="region of interest" description="Disordered" evidence="1">
    <location>
        <begin position="156"/>
        <end position="188"/>
    </location>
</feature>
<feature type="region of interest" description="Disordered" evidence="1">
    <location>
        <begin position="255"/>
        <end position="274"/>
    </location>
</feature>
<feature type="compositionally biased region" description="Polar residues" evidence="1">
    <location>
        <begin position="171"/>
        <end position="183"/>
    </location>
</feature>
<feature type="compositionally biased region" description="Basic and acidic residues" evidence="1">
    <location>
        <begin position="257"/>
        <end position="274"/>
    </location>
</feature>
<feature type="mutagenesis site" description="Does not alter centriole localization; Does not alter cilium localization; Partial rescue cilia assembly in the hyls-1 deletion mutants." evidence="2">
    <original>D</original>
    <variation>G</variation>
    <location>
        <position position="210"/>
    </location>
</feature>
<comment type="function">
    <text evidence="2">Plays an important role in ciliogenesis (PubMed:19656802).</text>
</comment>
<comment type="subunit">
    <text evidence="2">Interacts with sas-4; leading to its localization into newly forming centrioles.</text>
</comment>
<comment type="subcellular location">
    <subcellularLocation>
        <location evidence="2">Cytoplasm</location>
        <location evidence="2">Cytoskeleton</location>
        <location evidence="2">Microtubule organizing center</location>
        <location evidence="2">Centrosome</location>
        <location evidence="2">Centriole</location>
    </subcellularLocation>
    <subcellularLocation>
        <location evidence="2">Cell projection</location>
        <location evidence="2">Cilium</location>
    </subcellularLocation>
    <text evidence="2">Colocalizes with sas-4 to centrioles throughout the embryonic cell cycle and in sperm (PubMed:19656802). Localizes at the base of mature cilia (PubMed:19656802).</text>
</comment>
<comment type="disruption phenotype">
    <text evidence="2">Embryos do not show centriole duplication defects, are viable, and develop into fertile adults, but only 10% of the normal number of ciliated neurons are observed.</text>
</comment>
<comment type="similarity">
    <text evidence="3">Belongs to the HYLS1 family.</text>
</comment>
<protein>
    <recommendedName>
        <fullName evidence="3">Centriolar and ciliogenesis-associated protein hyls-1</fullName>
    </recommendedName>
    <alternativeName>
        <fullName>Hydrolethalus syndrome protein 1 homolog</fullName>
    </alternativeName>
</protein>
<dbReference type="EMBL" id="BX284605">
    <property type="protein sequence ID" value="CCD63094.1"/>
    <property type="molecule type" value="Genomic_DNA"/>
</dbReference>
<dbReference type="RefSeq" id="NP_504840.1">
    <property type="nucleotide sequence ID" value="NM_072439.7"/>
</dbReference>
<dbReference type="FunCoup" id="Q95X94">
    <property type="interactions" value="448"/>
</dbReference>
<dbReference type="IntAct" id="Q95X94">
    <property type="interactions" value="1"/>
</dbReference>
<dbReference type="STRING" id="6239.C05C8.9a.1"/>
<dbReference type="PaxDb" id="6239-C05C8.9a.1"/>
<dbReference type="EnsemblMetazoa" id="C05C8.9a.1">
    <property type="protein sequence ID" value="C05C8.9a.1"/>
    <property type="gene ID" value="WBGene00015466"/>
</dbReference>
<dbReference type="GeneID" id="179118"/>
<dbReference type="KEGG" id="cel:CELE_C05C8.9"/>
<dbReference type="UCSC" id="C05C8.9a">
    <property type="organism name" value="c. elegans"/>
</dbReference>
<dbReference type="AGR" id="WB:WBGene00015466"/>
<dbReference type="CTD" id="179118"/>
<dbReference type="WormBase" id="C05C8.9a">
    <property type="protein sequence ID" value="CE28884"/>
    <property type="gene ID" value="WBGene00015466"/>
    <property type="gene designation" value="hyls-1"/>
</dbReference>
<dbReference type="eggNOG" id="ENOG502SGJ2">
    <property type="taxonomic scope" value="Eukaryota"/>
</dbReference>
<dbReference type="HOGENOM" id="CLU_088342_0_0_1"/>
<dbReference type="InParanoid" id="Q95X94"/>
<dbReference type="OMA" id="HRAYETC"/>
<dbReference type="OrthoDB" id="6343432at2759"/>
<dbReference type="PhylomeDB" id="Q95X94"/>
<dbReference type="SignaLink" id="Q95X94"/>
<dbReference type="PRO" id="PR:Q95X94"/>
<dbReference type="Proteomes" id="UP000001940">
    <property type="component" value="Chromosome V"/>
</dbReference>
<dbReference type="Bgee" id="WBGene00015466">
    <property type="expression patterns" value="Expressed in germ line (C elegans) and 4 other cell types or tissues"/>
</dbReference>
<dbReference type="ExpressionAtlas" id="Q95X94">
    <property type="expression patterns" value="baseline and differential"/>
</dbReference>
<dbReference type="GO" id="GO:0005814">
    <property type="term" value="C:centriole"/>
    <property type="evidence" value="ECO:0000314"/>
    <property type="project" value="WormBase"/>
</dbReference>
<dbReference type="GO" id="GO:0005737">
    <property type="term" value="C:cytoplasm"/>
    <property type="evidence" value="ECO:0007669"/>
    <property type="project" value="UniProtKB-KW"/>
</dbReference>
<dbReference type="GO" id="GO:0097730">
    <property type="term" value="C:non-motile cilium"/>
    <property type="evidence" value="ECO:0000314"/>
    <property type="project" value="WormBase"/>
</dbReference>
<dbReference type="GO" id="GO:0060271">
    <property type="term" value="P:cilium assembly"/>
    <property type="evidence" value="ECO:0000315"/>
    <property type="project" value="WormBase"/>
</dbReference>
<dbReference type="GO" id="GO:0060756">
    <property type="term" value="P:foraging behavior"/>
    <property type="evidence" value="ECO:0000315"/>
    <property type="project" value="WormBase"/>
</dbReference>
<dbReference type="InterPro" id="IPR052319">
    <property type="entry name" value="Centriolar_ciliogenesis_assoc"/>
</dbReference>
<dbReference type="InterPro" id="IPR027918">
    <property type="entry name" value="HYLS1_C_dom"/>
</dbReference>
<dbReference type="PANTHER" id="PTHR34174:SF1">
    <property type="entry name" value="CENTRIOLAR AND CILIOGENESIS-ASSOCIATED PROTEIN HYLS1"/>
    <property type="match status" value="1"/>
</dbReference>
<dbReference type="PANTHER" id="PTHR34174">
    <property type="entry name" value="HYDROLETHALUS SYNDROME PROTEIN 1"/>
    <property type="match status" value="1"/>
</dbReference>
<dbReference type="Pfam" id="PF15311">
    <property type="entry name" value="HYLS1_C"/>
    <property type="match status" value="1"/>
</dbReference>
<name>HYLS1_CAEEL</name>
<keyword id="KW-0966">Cell projection</keyword>
<keyword id="KW-0970">Cilium biogenesis/degradation</keyword>
<keyword id="KW-0963">Cytoplasm</keyword>
<keyword id="KW-0206">Cytoskeleton</keyword>
<keyword id="KW-0597">Phosphoprotein</keyword>
<keyword id="KW-1185">Reference proteome</keyword>
<reference key="1">
    <citation type="journal article" date="1998" name="Science">
        <title>Genome sequence of the nematode C. elegans: a platform for investigating biology.</title>
        <authorList>
            <consortium name="The C. elegans sequencing consortium"/>
        </authorList>
    </citation>
    <scope>NUCLEOTIDE SEQUENCE [LARGE SCALE GENOMIC DNA]</scope>
    <source>
        <strain>Bristol N2</strain>
    </source>
</reference>
<reference key="2">
    <citation type="journal article" date="2009" name="Genes Dev.">
        <title>The hydrolethalus syndrome protein HYLS-1 links core centriole structure to cilia formation.</title>
        <authorList>
            <person name="Dammermann A."/>
            <person name="Pemble H."/>
            <person name="Mitchell B.J."/>
            <person name="McLeod I."/>
            <person name="Yates J.R. III"/>
            <person name="Kintner C."/>
            <person name="Desai A.B."/>
            <person name="Oegema K."/>
        </authorList>
    </citation>
    <scope>SUBCELLULAR LOCATION</scope>
    <scope>INTERACTION WITH SAS-4</scope>
    <scope>FUNCTION</scope>
    <scope>MUTAGENESIS OF ASP-210</scope>
    <scope>DISRUPTION PHENOTYPE</scope>
</reference>
<sequence length="274" mass="32182">MANFTTENELEDILHQMGHHIHDKNQFATFKNEIDNLLDRELCLSDADEDVMNESLFASLSVDPAAQFIRQERNFPTENLNIQSPIVSRKRQGKRFIYENVELQSDFDDESSNEYPERNLLVDRAWRSIHRAMETCNGATETLKSISLDGSDIQERSSVDDEENIAESVSVGLSTETEQSELQKSSRPEKEVWTRNVLSLEPGRAPKKYDPVTRYHFYKSEWDRHPAPGEMRRLSLRWKVREFMLRHDVPRLNENNEDWKANHDKDWSPRPYID</sequence>